<proteinExistence type="inferred from homology"/>
<comment type="function">
    <text evidence="1">The glycine cleavage system catalyzes the degradation of glycine. The H protein shuttles the methylamine group of glycine from the P protein to the T protein.</text>
</comment>
<comment type="cofactor">
    <cofactor evidence="1">
        <name>(R)-lipoate</name>
        <dbReference type="ChEBI" id="CHEBI:83088"/>
    </cofactor>
    <text evidence="1">Binds 1 lipoyl cofactor covalently.</text>
</comment>
<comment type="subunit">
    <text evidence="1">The glycine cleavage system is composed of four proteins: P, T, L and H.</text>
</comment>
<comment type="similarity">
    <text evidence="1">Belongs to the GcvH family.</text>
</comment>
<evidence type="ECO:0000255" key="1">
    <source>
        <dbReference type="HAMAP-Rule" id="MF_00272"/>
    </source>
</evidence>
<evidence type="ECO:0000255" key="2">
    <source>
        <dbReference type="PROSITE-ProRule" id="PRU01066"/>
    </source>
</evidence>
<protein>
    <recommendedName>
        <fullName evidence="1">Glycine cleavage system H protein</fullName>
    </recommendedName>
</protein>
<reference key="1">
    <citation type="journal article" date="2009" name="Appl. Environ. Microbiol.">
        <title>Complete genome sequence of the chemolithoautotrophic marine magnetotactic coccus strain MC-1.</title>
        <authorList>
            <person name="Schubbe S."/>
            <person name="Williams T.J."/>
            <person name="Xie G."/>
            <person name="Kiss H.E."/>
            <person name="Brettin T.S."/>
            <person name="Martinez D."/>
            <person name="Ross C.A."/>
            <person name="Schuler D."/>
            <person name="Cox B.L."/>
            <person name="Nealson K.H."/>
            <person name="Bazylinski D.A."/>
        </authorList>
    </citation>
    <scope>NUCLEOTIDE SEQUENCE [LARGE SCALE GENOMIC DNA]</scope>
    <source>
        <strain>ATCC BAA-1437 / JCM 17883 / MC-1</strain>
    </source>
</reference>
<accession>A0LDQ0</accession>
<feature type="chain" id="PRO_0000302386" description="Glycine cleavage system H protein">
    <location>
        <begin position="1"/>
        <end position="140"/>
    </location>
</feature>
<feature type="domain" description="Lipoyl-binding" evidence="2">
    <location>
        <begin position="22"/>
        <end position="104"/>
    </location>
</feature>
<feature type="modified residue" description="N6-lipoyllysine" evidence="1">
    <location>
        <position position="63"/>
    </location>
</feature>
<gene>
    <name evidence="1" type="primary">gcvH</name>
    <name type="ordered locus">Mmc1_3608</name>
</gene>
<keyword id="KW-0450">Lipoyl</keyword>
<keyword id="KW-1185">Reference proteome</keyword>
<sequence>MSIPQELYYTKDHEWLRKEGDEVVIGITRFAADQLGDVVFVELPQVEDTLQMGGTFGVVESVKAASDLFSPITGQVIATNPDLAEAPELVNEDPYGKGWMLRLKPEDPAQMDALLTAQAYTAWLETCSSFAVRFGQNLTL</sequence>
<name>GCSH_MAGMM</name>
<dbReference type="EMBL" id="CP000471">
    <property type="protein sequence ID" value="ABK46093.1"/>
    <property type="molecule type" value="Genomic_DNA"/>
</dbReference>
<dbReference type="RefSeq" id="WP_011715149.1">
    <property type="nucleotide sequence ID" value="NC_008576.1"/>
</dbReference>
<dbReference type="SMR" id="A0LDQ0"/>
<dbReference type="STRING" id="156889.Mmc1_3608"/>
<dbReference type="KEGG" id="mgm:Mmc1_3608"/>
<dbReference type="eggNOG" id="COG0509">
    <property type="taxonomic scope" value="Bacteria"/>
</dbReference>
<dbReference type="HOGENOM" id="CLU_097408_2_0_5"/>
<dbReference type="OrthoDB" id="9796712at2"/>
<dbReference type="Proteomes" id="UP000002586">
    <property type="component" value="Chromosome"/>
</dbReference>
<dbReference type="GO" id="GO:0005829">
    <property type="term" value="C:cytosol"/>
    <property type="evidence" value="ECO:0007669"/>
    <property type="project" value="TreeGrafter"/>
</dbReference>
<dbReference type="GO" id="GO:0005960">
    <property type="term" value="C:glycine cleavage complex"/>
    <property type="evidence" value="ECO:0007669"/>
    <property type="project" value="InterPro"/>
</dbReference>
<dbReference type="GO" id="GO:0019464">
    <property type="term" value="P:glycine decarboxylation via glycine cleavage system"/>
    <property type="evidence" value="ECO:0007669"/>
    <property type="project" value="UniProtKB-UniRule"/>
</dbReference>
<dbReference type="CDD" id="cd06848">
    <property type="entry name" value="GCS_H"/>
    <property type="match status" value="1"/>
</dbReference>
<dbReference type="Gene3D" id="2.40.50.100">
    <property type="match status" value="1"/>
</dbReference>
<dbReference type="HAMAP" id="MF_00272">
    <property type="entry name" value="GcvH"/>
    <property type="match status" value="1"/>
</dbReference>
<dbReference type="InterPro" id="IPR000089">
    <property type="entry name" value="Biotin_lipoyl"/>
</dbReference>
<dbReference type="InterPro" id="IPR002930">
    <property type="entry name" value="GCV_H"/>
</dbReference>
<dbReference type="InterPro" id="IPR033753">
    <property type="entry name" value="GCV_H/Fam206"/>
</dbReference>
<dbReference type="InterPro" id="IPR017453">
    <property type="entry name" value="GCV_H_sub"/>
</dbReference>
<dbReference type="InterPro" id="IPR011053">
    <property type="entry name" value="Single_hybrid_motif"/>
</dbReference>
<dbReference type="NCBIfam" id="TIGR00527">
    <property type="entry name" value="gcvH"/>
    <property type="match status" value="1"/>
</dbReference>
<dbReference type="NCBIfam" id="NF002270">
    <property type="entry name" value="PRK01202.1"/>
    <property type="match status" value="1"/>
</dbReference>
<dbReference type="PANTHER" id="PTHR11715">
    <property type="entry name" value="GLYCINE CLEAVAGE SYSTEM H PROTEIN"/>
    <property type="match status" value="1"/>
</dbReference>
<dbReference type="PANTHER" id="PTHR11715:SF3">
    <property type="entry name" value="GLYCINE CLEAVAGE SYSTEM H PROTEIN-RELATED"/>
    <property type="match status" value="1"/>
</dbReference>
<dbReference type="Pfam" id="PF01597">
    <property type="entry name" value="GCV_H"/>
    <property type="match status" value="1"/>
</dbReference>
<dbReference type="SUPFAM" id="SSF51230">
    <property type="entry name" value="Single hybrid motif"/>
    <property type="match status" value="1"/>
</dbReference>
<dbReference type="PROSITE" id="PS50968">
    <property type="entry name" value="BIOTINYL_LIPOYL"/>
    <property type="match status" value="1"/>
</dbReference>
<organism>
    <name type="scientific">Magnetococcus marinus (strain ATCC BAA-1437 / JCM 17883 / MC-1)</name>
    <dbReference type="NCBI Taxonomy" id="156889"/>
    <lineage>
        <taxon>Bacteria</taxon>
        <taxon>Pseudomonadati</taxon>
        <taxon>Pseudomonadota</taxon>
        <taxon>Alphaproteobacteria</taxon>
        <taxon>Magnetococcales</taxon>
        <taxon>Magnetococcaceae</taxon>
        <taxon>Magnetococcus</taxon>
    </lineage>
</organism>